<evidence type="ECO:0000255" key="1">
    <source>
        <dbReference type="HAMAP-Rule" id="MF_00817"/>
    </source>
</evidence>
<feature type="chain" id="PRO_1000134272" description="NADPH-dependent 7-cyano-7-deazaguanine reductase">
    <location>
        <begin position="1"/>
        <end position="274"/>
    </location>
</feature>
<feature type="active site" description="Thioimide intermediate" evidence="1">
    <location>
        <position position="181"/>
    </location>
</feature>
<feature type="active site" description="Proton donor" evidence="1">
    <location>
        <position position="188"/>
    </location>
</feature>
<feature type="binding site" evidence="1">
    <location>
        <begin position="80"/>
        <end position="82"/>
    </location>
    <ligand>
        <name>substrate</name>
    </ligand>
</feature>
<feature type="binding site" evidence="1">
    <location>
        <begin position="82"/>
        <end position="83"/>
    </location>
    <ligand>
        <name>NADPH</name>
        <dbReference type="ChEBI" id="CHEBI:57783"/>
    </ligand>
</feature>
<feature type="binding site" evidence="1">
    <location>
        <begin position="220"/>
        <end position="221"/>
    </location>
    <ligand>
        <name>substrate</name>
    </ligand>
</feature>
<feature type="binding site" evidence="1">
    <location>
        <begin position="249"/>
        <end position="250"/>
    </location>
    <ligand>
        <name>NADPH</name>
        <dbReference type="ChEBI" id="CHEBI:57783"/>
    </ligand>
</feature>
<accession>B2JCU2</accession>
<protein>
    <recommendedName>
        <fullName evidence="1">NADPH-dependent 7-cyano-7-deazaguanine reductase</fullName>
        <ecNumber evidence="1">1.7.1.13</ecNumber>
    </recommendedName>
    <alternativeName>
        <fullName evidence="1">7-cyano-7-carbaguanine reductase</fullName>
    </alternativeName>
    <alternativeName>
        <fullName evidence="1">NADPH-dependent nitrile oxidoreductase</fullName>
    </alternativeName>
    <alternativeName>
        <fullName evidence="1">PreQ(0) reductase</fullName>
    </alternativeName>
</protein>
<dbReference type="EC" id="1.7.1.13" evidence="1"/>
<dbReference type="EMBL" id="CP001043">
    <property type="protein sequence ID" value="ACC69561.1"/>
    <property type="molecule type" value="Genomic_DNA"/>
</dbReference>
<dbReference type="RefSeq" id="WP_012399787.1">
    <property type="nucleotide sequence ID" value="NC_010622.1"/>
</dbReference>
<dbReference type="SMR" id="B2JCU2"/>
<dbReference type="STRING" id="391038.Bphy_0368"/>
<dbReference type="KEGG" id="bph:Bphy_0368"/>
<dbReference type="eggNOG" id="COG0780">
    <property type="taxonomic scope" value="Bacteria"/>
</dbReference>
<dbReference type="eggNOG" id="COG2904">
    <property type="taxonomic scope" value="Bacteria"/>
</dbReference>
<dbReference type="HOGENOM" id="CLU_054738_0_0_4"/>
<dbReference type="OrthoDB" id="9789995at2"/>
<dbReference type="UniPathway" id="UPA00392"/>
<dbReference type="Proteomes" id="UP000001192">
    <property type="component" value="Chromosome 1"/>
</dbReference>
<dbReference type="GO" id="GO:0005737">
    <property type="term" value="C:cytoplasm"/>
    <property type="evidence" value="ECO:0007669"/>
    <property type="project" value="UniProtKB-SubCell"/>
</dbReference>
<dbReference type="GO" id="GO:0033739">
    <property type="term" value="F:preQ1 synthase activity"/>
    <property type="evidence" value="ECO:0007669"/>
    <property type="project" value="UniProtKB-UniRule"/>
</dbReference>
<dbReference type="GO" id="GO:0008616">
    <property type="term" value="P:queuosine biosynthetic process"/>
    <property type="evidence" value="ECO:0007669"/>
    <property type="project" value="UniProtKB-UniRule"/>
</dbReference>
<dbReference type="GO" id="GO:0006400">
    <property type="term" value="P:tRNA modification"/>
    <property type="evidence" value="ECO:0007669"/>
    <property type="project" value="UniProtKB-UniRule"/>
</dbReference>
<dbReference type="Gene3D" id="3.30.1130.10">
    <property type="match status" value="2"/>
</dbReference>
<dbReference type="HAMAP" id="MF_00817">
    <property type="entry name" value="QueF_type2"/>
    <property type="match status" value="1"/>
</dbReference>
<dbReference type="InterPro" id="IPR043133">
    <property type="entry name" value="GTP-CH-I_C/QueF"/>
</dbReference>
<dbReference type="InterPro" id="IPR050084">
    <property type="entry name" value="NADPH_dep_7-cyano-7-deazaG_red"/>
</dbReference>
<dbReference type="InterPro" id="IPR029500">
    <property type="entry name" value="QueF"/>
</dbReference>
<dbReference type="InterPro" id="IPR029139">
    <property type="entry name" value="QueF_N"/>
</dbReference>
<dbReference type="InterPro" id="IPR016428">
    <property type="entry name" value="QueF_type2"/>
</dbReference>
<dbReference type="NCBIfam" id="TIGR03138">
    <property type="entry name" value="QueF"/>
    <property type="match status" value="1"/>
</dbReference>
<dbReference type="PANTHER" id="PTHR34354">
    <property type="entry name" value="NADPH-DEPENDENT 7-CYANO-7-DEAZAGUANINE REDUCTASE"/>
    <property type="match status" value="1"/>
</dbReference>
<dbReference type="PANTHER" id="PTHR34354:SF1">
    <property type="entry name" value="NADPH-DEPENDENT 7-CYANO-7-DEAZAGUANINE REDUCTASE"/>
    <property type="match status" value="1"/>
</dbReference>
<dbReference type="Pfam" id="PF14489">
    <property type="entry name" value="QueF"/>
    <property type="match status" value="1"/>
</dbReference>
<dbReference type="Pfam" id="PF14819">
    <property type="entry name" value="QueF_N"/>
    <property type="match status" value="1"/>
</dbReference>
<dbReference type="PIRSF" id="PIRSF004750">
    <property type="entry name" value="Nitrile_oxidored_YqcD_prd"/>
    <property type="match status" value="1"/>
</dbReference>
<dbReference type="SUPFAM" id="SSF55620">
    <property type="entry name" value="Tetrahydrobiopterin biosynthesis enzymes-like"/>
    <property type="match status" value="1"/>
</dbReference>
<reference key="1">
    <citation type="journal article" date="2014" name="Stand. Genomic Sci.">
        <title>Complete genome sequence of Burkholderia phymatum STM815(T), a broad host range and efficient nitrogen-fixing symbiont of Mimosa species.</title>
        <authorList>
            <person name="Moulin L."/>
            <person name="Klonowska A."/>
            <person name="Caroline B."/>
            <person name="Booth K."/>
            <person name="Vriezen J.A."/>
            <person name="Melkonian R."/>
            <person name="James E.K."/>
            <person name="Young J.P."/>
            <person name="Bena G."/>
            <person name="Hauser L."/>
            <person name="Land M."/>
            <person name="Kyrpides N."/>
            <person name="Bruce D."/>
            <person name="Chain P."/>
            <person name="Copeland A."/>
            <person name="Pitluck S."/>
            <person name="Woyke T."/>
            <person name="Lizotte-Waniewski M."/>
            <person name="Bristow J."/>
            <person name="Riley M."/>
        </authorList>
    </citation>
    <scope>NUCLEOTIDE SEQUENCE [LARGE SCALE GENOMIC DNA]</scope>
    <source>
        <strain>DSM 17167 / CIP 108236 / LMG 21445 / STM815</strain>
    </source>
</reference>
<gene>
    <name evidence="1" type="primary">queF</name>
    <name type="ordered locus">Bphy_0368</name>
</gene>
<keyword id="KW-0963">Cytoplasm</keyword>
<keyword id="KW-0521">NADP</keyword>
<keyword id="KW-0560">Oxidoreductase</keyword>
<keyword id="KW-0671">Queuosine biosynthesis</keyword>
<keyword id="KW-1185">Reference proteome</keyword>
<comment type="function">
    <text evidence="1">Catalyzes the NADPH-dependent reduction of 7-cyano-7-deazaguanine (preQ0) to 7-aminomethyl-7-deazaguanine (preQ1).</text>
</comment>
<comment type="catalytic activity">
    <reaction evidence="1">
        <text>7-aminomethyl-7-carbaguanine + 2 NADP(+) = 7-cyano-7-deazaguanine + 2 NADPH + 3 H(+)</text>
        <dbReference type="Rhea" id="RHEA:13409"/>
        <dbReference type="ChEBI" id="CHEBI:15378"/>
        <dbReference type="ChEBI" id="CHEBI:45075"/>
        <dbReference type="ChEBI" id="CHEBI:57783"/>
        <dbReference type="ChEBI" id="CHEBI:58349"/>
        <dbReference type="ChEBI" id="CHEBI:58703"/>
        <dbReference type="EC" id="1.7.1.13"/>
    </reaction>
</comment>
<comment type="pathway">
    <text evidence="1">tRNA modification; tRNA-queuosine biosynthesis.</text>
</comment>
<comment type="subunit">
    <text evidence="1">Homodimer.</text>
</comment>
<comment type="subcellular location">
    <subcellularLocation>
        <location evidence="1">Cytoplasm</location>
    </subcellularLocation>
</comment>
<comment type="similarity">
    <text evidence="1">Belongs to the GTP cyclohydrolase I family. QueF type 2 subfamily.</text>
</comment>
<sequence>MTPEQSPLGKPSSYTEQYDASLLFPIARKNARDQIGIGATLPFFGTDIWNAYELSWLNARGKPQIAIATFYVPADSPNIVESKSFKLYLGSFAQSSFDSIDVVRDTIKRDVSAACGSSVSLHLYPPAEFSKLGLEEFEGTSLDRLDLDAEVYQPDASILKAALDEAPVEETLFSNLLKSNCPVTGQPDWGSVQIHYVGPQIDHAALLRYIISYRNHTGFHEQCVEKIFLDVMKVCQPVKLAVYARYTRRGGLDINPFRTNFNLPMPDNLRTARQ</sequence>
<proteinExistence type="inferred from homology"/>
<name>QUEF_PARP8</name>
<organism>
    <name type="scientific">Paraburkholderia phymatum (strain DSM 17167 / CIP 108236 / LMG 21445 / STM815)</name>
    <name type="common">Burkholderia phymatum</name>
    <dbReference type="NCBI Taxonomy" id="391038"/>
    <lineage>
        <taxon>Bacteria</taxon>
        <taxon>Pseudomonadati</taxon>
        <taxon>Pseudomonadota</taxon>
        <taxon>Betaproteobacteria</taxon>
        <taxon>Burkholderiales</taxon>
        <taxon>Burkholderiaceae</taxon>
        <taxon>Paraburkholderia</taxon>
    </lineage>
</organism>